<evidence type="ECO:0000255" key="1">
    <source>
        <dbReference type="HAMAP-Rule" id="MF_00134"/>
    </source>
</evidence>
<reference key="1">
    <citation type="journal article" date="2002" name="Genome Res.">
        <title>A complete sequence of the T. tengcongensis genome.</title>
        <authorList>
            <person name="Bao Q."/>
            <person name="Tian Y."/>
            <person name="Li W."/>
            <person name="Xu Z."/>
            <person name="Xuan Z."/>
            <person name="Hu S."/>
            <person name="Dong W."/>
            <person name="Yang J."/>
            <person name="Chen Y."/>
            <person name="Xue Y."/>
            <person name="Xu Y."/>
            <person name="Lai X."/>
            <person name="Huang L."/>
            <person name="Dong X."/>
            <person name="Ma Y."/>
            <person name="Ling L."/>
            <person name="Tan H."/>
            <person name="Chen R."/>
            <person name="Wang J."/>
            <person name="Yu J."/>
            <person name="Yang H."/>
        </authorList>
    </citation>
    <scope>NUCLEOTIDE SEQUENCE [LARGE SCALE GENOMIC DNA]</scope>
    <source>
        <strain>DSM 15242 / JCM 11007 / NBRC 100824 / MB4</strain>
    </source>
</reference>
<comment type="catalytic activity">
    <reaction evidence="1">
        <text>1-(2-carboxyphenylamino)-1-deoxy-D-ribulose 5-phosphate + H(+) = (1S,2R)-1-C-(indol-3-yl)glycerol 3-phosphate + CO2 + H2O</text>
        <dbReference type="Rhea" id="RHEA:23476"/>
        <dbReference type="ChEBI" id="CHEBI:15377"/>
        <dbReference type="ChEBI" id="CHEBI:15378"/>
        <dbReference type="ChEBI" id="CHEBI:16526"/>
        <dbReference type="ChEBI" id="CHEBI:58613"/>
        <dbReference type="ChEBI" id="CHEBI:58866"/>
        <dbReference type="EC" id="4.1.1.48"/>
    </reaction>
</comment>
<comment type="pathway">
    <text evidence="1">Amino-acid biosynthesis; L-tryptophan biosynthesis; L-tryptophan from chorismate: step 4/5.</text>
</comment>
<comment type="similarity">
    <text evidence="1">Belongs to the TrpC family.</text>
</comment>
<name>TRPC_CALS4</name>
<keyword id="KW-0028">Amino-acid biosynthesis</keyword>
<keyword id="KW-0057">Aromatic amino acid biosynthesis</keyword>
<keyword id="KW-0210">Decarboxylase</keyword>
<keyword id="KW-0456">Lyase</keyword>
<keyword id="KW-1185">Reference proteome</keyword>
<keyword id="KW-0822">Tryptophan biosynthesis</keyword>
<organism>
    <name type="scientific">Caldanaerobacter subterraneus subsp. tengcongensis (strain DSM 15242 / JCM 11007 / NBRC 100824 / MB4)</name>
    <name type="common">Thermoanaerobacter tengcongensis</name>
    <dbReference type="NCBI Taxonomy" id="273068"/>
    <lineage>
        <taxon>Bacteria</taxon>
        <taxon>Bacillati</taxon>
        <taxon>Bacillota</taxon>
        <taxon>Clostridia</taxon>
        <taxon>Thermoanaerobacterales</taxon>
        <taxon>Thermoanaerobacteraceae</taxon>
        <taxon>Caldanaerobacter</taxon>
    </lineage>
</organism>
<gene>
    <name evidence="1" type="primary">trpC</name>
    <name type="ordered locus">TTE1580</name>
</gene>
<feature type="chain" id="PRO_1000018565" description="Indole-3-glycerol phosphate synthase">
    <location>
        <begin position="1"/>
        <end position="256"/>
    </location>
</feature>
<dbReference type="EC" id="4.1.1.48" evidence="1"/>
<dbReference type="EMBL" id="AE008691">
    <property type="protein sequence ID" value="AAM24784.1"/>
    <property type="molecule type" value="Genomic_DNA"/>
</dbReference>
<dbReference type="RefSeq" id="WP_011025817.1">
    <property type="nucleotide sequence ID" value="NC_003869.1"/>
</dbReference>
<dbReference type="SMR" id="Q8R9M7"/>
<dbReference type="STRING" id="273068.TTE1580"/>
<dbReference type="KEGG" id="tte:TTE1580"/>
<dbReference type="eggNOG" id="COG0134">
    <property type="taxonomic scope" value="Bacteria"/>
</dbReference>
<dbReference type="HOGENOM" id="CLU_034247_2_0_9"/>
<dbReference type="OrthoDB" id="9804217at2"/>
<dbReference type="UniPathway" id="UPA00035">
    <property type="reaction ID" value="UER00043"/>
</dbReference>
<dbReference type="Proteomes" id="UP000000555">
    <property type="component" value="Chromosome"/>
</dbReference>
<dbReference type="GO" id="GO:0004425">
    <property type="term" value="F:indole-3-glycerol-phosphate synthase activity"/>
    <property type="evidence" value="ECO:0007669"/>
    <property type="project" value="UniProtKB-UniRule"/>
</dbReference>
<dbReference type="GO" id="GO:0004640">
    <property type="term" value="F:phosphoribosylanthranilate isomerase activity"/>
    <property type="evidence" value="ECO:0007669"/>
    <property type="project" value="TreeGrafter"/>
</dbReference>
<dbReference type="GO" id="GO:0000162">
    <property type="term" value="P:L-tryptophan biosynthetic process"/>
    <property type="evidence" value="ECO:0007669"/>
    <property type="project" value="UniProtKB-UniRule"/>
</dbReference>
<dbReference type="CDD" id="cd00331">
    <property type="entry name" value="IGPS"/>
    <property type="match status" value="1"/>
</dbReference>
<dbReference type="FunFam" id="3.20.20.70:FF:000024">
    <property type="entry name" value="Indole-3-glycerol phosphate synthase"/>
    <property type="match status" value="1"/>
</dbReference>
<dbReference type="Gene3D" id="3.20.20.70">
    <property type="entry name" value="Aldolase class I"/>
    <property type="match status" value="1"/>
</dbReference>
<dbReference type="HAMAP" id="MF_00134_A">
    <property type="entry name" value="IGPS_A"/>
    <property type="match status" value="1"/>
</dbReference>
<dbReference type="HAMAP" id="MF_00134_B">
    <property type="entry name" value="IGPS_B"/>
    <property type="match status" value="1"/>
</dbReference>
<dbReference type="InterPro" id="IPR013785">
    <property type="entry name" value="Aldolase_TIM"/>
</dbReference>
<dbReference type="InterPro" id="IPR045186">
    <property type="entry name" value="Indole-3-glycerol_P_synth"/>
</dbReference>
<dbReference type="InterPro" id="IPR013798">
    <property type="entry name" value="Indole-3-glycerol_P_synth_dom"/>
</dbReference>
<dbReference type="InterPro" id="IPR001468">
    <property type="entry name" value="Indole-3-GlycerolPSynthase_CS"/>
</dbReference>
<dbReference type="InterPro" id="IPR011060">
    <property type="entry name" value="RibuloseP-bd_barrel"/>
</dbReference>
<dbReference type="NCBIfam" id="NF001377">
    <property type="entry name" value="PRK00278.2-4"/>
    <property type="match status" value="1"/>
</dbReference>
<dbReference type="PANTHER" id="PTHR22854:SF2">
    <property type="entry name" value="INDOLE-3-GLYCEROL-PHOSPHATE SYNTHASE"/>
    <property type="match status" value="1"/>
</dbReference>
<dbReference type="PANTHER" id="PTHR22854">
    <property type="entry name" value="TRYPTOPHAN BIOSYNTHESIS PROTEIN"/>
    <property type="match status" value="1"/>
</dbReference>
<dbReference type="Pfam" id="PF00218">
    <property type="entry name" value="IGPS"/>
    <property type="match status" value="1"/>
</dbReference>
<dbReference type="SUPFAM" id="SSF51366">
    <property type="entry name" value="Ribulose-phoshate binding barrel"/>
    <property type="match status" value="1"/>
</dbReference>
<dbReference type="PROSITE" id="PS00614">
    <property type="entry name" value="IGPS"/>
    <property type="match status" value="1"/>
</dbReference>
<accession>Q8R9M7</accession>
<sequence length="256" mass="28926">MILEEIVNFKKEEVRKKKELKPYNELLNVNAVYRGDFKNSLNKGKVAIIGEIKRASPSKGIIREEFDLVEIAKTYEKAEVDAISVLTEKRFFKGEGGYIPQVKKLTTKPVLRKDFVIDEYQIYESKFLGADAVLLIVAILEDKLKGFCDIAKQIGLDVLVEVHEEEELETALKAGCDIIGINNRDLKTFKVDIKTTERLIKNIPKDKIVVSESGIKTPEDVLYLSSLGVKAVLIGESFMKMDEGRIKEFVKKVRGG</sequence>
<proteinExistence type="inferred from homology"/>
<protein>
    <recommendedName>
        <fullName evidence="1">Indole-3-glycerol phosphate synthase</fullName>
        <shortName evidence="1">IGPS</shortName>
        <ecNumber evidence="1">4.1.1.48</ecNumber>
    </recommendedName>
</protein>